<reference key="1">
    <citation type="journal article" date="2009" name="Proc. Natl. Acad. Sci. U.S.A.">
        <title>Biogeography of the Sulfolobus islandicus pan-genome.</title>
        <authorList>
            <person name="Reno M.L."/>
            <person name="Held N.L."/>
            <person name="Fields C.J."/>
            <person name="Burke P.V."/>
            <person name="Whitaker R.J."/>
        </authorList>
    </citation>
    <scope>NUCLEOTIDE SEQUENCE [LARGE SCALE GENOMIC DNA]</scope>
    <source>
        <strain>M.16.27</strain>
    </source>
</reference>
<name>CBIT_SACI3</name>
<evidence type="ECO:0000255" key="1">
    <source>
        <dbReference type="HAMAP-Rule" id="MF_00786"/>
    </source>
</evidence>
<proteinExistence type="inferred from homology"/>
<dbReference type="EC" id="2.1.1.196" evidence="1"/>
<dbReference type="EMBL" id="CP001401">
    <property type="protein sequence ID" value="ACP54139.1"/>
    <property type="molecule type" value="Genomic_DNA"/>
</dbReference>
<dbReference type="RefSeq" id="WP_012710289.1">
    <property type="nucleotide sequence ID" value="NC_012632.1"/>
</dbReference>
<dbReference type="SMR" id="C3N0H8"/>
<dbReference type="GeneID" id="84060590"/>
<dbReference type="KEGG" id="sim:M1627_0110"/>
<dbReference type="HOGENOM" id="CLU_094143_0_0_2"/>
<dbReference type="UniPathway" id="UPA00148">
    <property type="reaction ID" value="UER00229"/>
</dbReference>
<dbReference type="Proteomes" id="UP000002307">
    <property type="component" value="Chromosome"/>
</dbReference>
<dbReference type="GO" id="GO:0043776">
    <property type="term" value="F:cobalt-precorrin-6B C5-methyltransferase activity"/>
    <property type="evidence" value="ECO:0007669"/>
    <property type="project" value="RHEA"/>
</dbReference>
<dbReference type="GO" id="GO:0008276">
    <property type="term" value="F:protein methyltransferase activity"/>
    <property type="evidence" value="ECO:0007669"/>
    <property type="project" value="InterPro"/>
</dbReference>
<dbReference type="GO" id="GO:0019251">
    <property type="term" value="P:anaerobic cobalamin biosynthetic process"/>
    <property type="evidence" value="ECO:0007669"/>
    <property type="project" value="UniProtKB-UniRule"/>
</dbReference>
<dbReference type="GO" id="GO:0032259">
    <property type="term" value="P:methylation"/>
    <property type="evidence" value="ECO:0007669"/>
    <property type="project" value="UniProtKB-KW"/>
</dbReference>
<dbReference type="CDD" id="cd02440">
    <property type="entry name" value="AdoMet_MTases"/>
    <property type="match status" value="1"/>
</dbReference>
<dbReference type="Gene3D" id="3.40.50.150">
    <property type="entry name" value="Vaccinia Virus protein VP39"/>
    <property type="match status" value="1"/>
</dbReference>
<dbReference type="HAMAP" id="MF_00786">
    <property type="entry name" value="CbiT"/>
    <property type="match status" value="1"/>
</dbReference>
<dbReference type="InterPro" id="IPR023475">
    <property type="entry name" value="CbiT"/>
</dbReference>
<dbReference type="InterPro" id="IPR014008">
    <property type="entry name" value="Cbl_synth_MTase_CbiT"/>
</dbReference>
<dbReference type="InterPro" id="IPR050714">
    <property type="entry name" value="Cobalamin_biosynth_MTase"/>
</dbReference>
<dbReference type="InterPro" id="IPR025714">
    <property type="entry name" value="Methyltranfer_dom"/>
</dbReference>
<dbReference type="InterPro" id="IPR029063">
    <property type="entry name" value="SAM-dependent_MTases_sf"/>
</dbReference>
<dbReference type="NCBIfam" id="TIGR02469">
    <property type="entry name" value="CbiT"/>
    <property type="match status" value="1"/>
</dbReference>
<dbReference type="NCBIfam" id="NF001556">
    <property type="entry name" value="PRK00377.1"/>
    <property type="match status" value="1"/>
</dbReference>
<dbReference type="PANTHER" id="PTHR43182">
    <property type="entry name" value="COBALT-PRECORRIN-6B C(15)-METHYLTRANSFERASE (DECARBOXYLATING)"/>
    <property type="match status" value="1"/>
</dbReference>
<dbReference type="PANTHER" id="PTHR43182:SF1">
    <property type="entry name" value="COBALT-PRECORRIN-7 C(5)-METHYLTRANSFERASE"/>
    <property type="match status" value="1"/>
</dbReference>
<dbReference type="Pfam" id="PF13847">
    <property type="entry name" value="Methyltransf_31"/>
    <property type="match status" value="1"/>
</dbReference>
<dbReference type="SUPFAM" id="SSF53335">
    <property type="entry name" value="S-adenosyl-L-methionine-dependent methyltransferases"/>
    <property type="match status" value="1"/>
</dbReference>
<feature type="chain" id="PRO_1000212929" description="Probable cobalt-precorrin-6B C(15)-methyltransferase (decarboxylating)">
    <location>
        <begin position="1"/>
        <end position="199"/>
    </location>
</feature>
<feature type="binding site" evidence="1">
    <location>
        <position position="24"/>
    </location>
    <ligand>
        <name>S-adenosyl-L-methionine</name>
        <dbReference type="ChEBI" id="CHEBI:59789"/>
    </ligand>
</feature>
<feature type="binding site" evidence="1">
    <location>
        <begin position="48"/>
        <end position="52"/>
    </location>
    <ligand>
        <name>S-adenosyl-L-methionine</name>
        <dbReference type="ChEBI" id="CHEBI:59789"/>
    </ligand>
</feature>
<feature type="binding site" evidence="1">
    <location>
        <position position="72"/>
    </location>
    <ligand>
        <name>S-adenosyl-L-methionine</name>
        <dbReference type="ChEBI" id="CHEBI:59789"/>
    </ligand>
</feature>
<feature type="binding site" evidence="1">
    <location>
        <position position="101"/>
    </location>
    <ligand>
        <name>S-adenosyl-L-methionine</name>
        <dbReference type="ChEBI" id="CHEBI:59789"/>
    </ligand>
</feature>
<protein>
    <recommendedName>
        <fullName evidence="1">Probable cobalt-precorrin-6B C(15)-methyltransferase (decarboxylating)</fullName>
        <ecNumber evidence="1">2.1.1.196</ecNumber>
    </recommendedName>
</protein>
<comment type="function">
    <text evidence="1">Catalyzes the methylation of C-15 in cobalt-precorrin-6B followed by the decarboxylation of C-12 to form cobalt-precorrin-7.</text>
</comment>
<comment type="catalytic activity">
    <reaction evidence="1">
        <text>Co-precorrin-6B + S-adenosyl-L-methionine = Co-precorrin-7 + S-adenosyl-L-homocysteine + CO2</text>
        <dbReference type="Rhea" id="RHEA:36067"/>
        <dbReference type="ChEBI" id="CHEBI:16526"/>
        <dbReference type="ChEBI" id="CHEBI:57856"/>
        <dbReference type="ChEBI" id="CHEBI:59789"/>
        <dbReference type="ChEBI" id="CHEBI:70791"/>
        <dbReference type="ChEBI" id="CHEBI:72780"/>
        <dbReference type="EC" id="2.1.1.196"/>
    </reaction>
</comment>
<comment type="pathway">
    <text evidence="1">Cofactor biosynthesis; adenosylcobalamin biosynthesis; cob(II)yrinate a,c-diamide from sirohydrochlorin (anaerobic route): step 8/10.</text>
</comment>
<comment type="similarity">
    <text evidence="1">Belongs to the methyltransferase superfamily. Archaeal-type CbiT family.</text>
</comment>
<organism>
    <name type="scientific">Saccharolobus islandicus (strain M.16.27)</name>
    <name type="common">Sulfolobus islandicus</name>
    <dbReference type="NCBI Taxonomy" id="427318"/>
    <lineage>
        <taxon>Archaea</taxon>
        <taxon>Thermoproteota</taxon>
        <taxon>Thermoprotei</taxon>
        <taxon>Sulfolobales</taxon>
        <taxon>Sulfolobaceae</taxon>
        <taxon>Saccharolobus</taxon>
    </lineage>
</organism>
<sequence>MEWKYVIPGIPDNFFERDEEIPMTKEEIRALALSKLRIRKGDMILDIGCGTGSVTVEASLLVGSTGKVYGVDKEEKAINLTRRNAEKFGVLNNIVLIKGEAPEILFTINEKFDRIFIGGGSEKIKEIISASWEIIKKGGRVVIDAILLETVNNAISAMENIGFMNLEITEVIIAKGMKTKVGTAMMTRNPIFIISGEKQ</sequence>
<accession>C3N0H8</accession>
<gene>
    <name evidence="1" type="primary">cbiT</name>
    <name type="ordered locus">M1627_0110</name>
</gene>
<keyword id="KW-0169">Cobalamin biosynthesis</keyword>
<keyword id="KW-0489">Methyltransferase</keyword>
<keyword id="KW-0949">S-adenosyl-L-methionine</keyword>
<keyword id="KW-0808">Transferase</keyword>